<keyword id="KW-0249">Electron transport</keyword>
<keyword id="KW-0349">Heme</keyword>
<keyword id="KW-0408">Iron</keyword>
<keyword id="KW-0472">Membrane</keyword>
<keyword id="KW-0479">Metal-binding</keyword>
<keyword id="KW-0496">Mitochondrion</keyword>
<keyword id="KW-0999">Mitochondrion inner membrane</keyword>
<keyword id="KW-1185">Reference proteome</keyword>
<keyword id="KW-0809">Transit peptide</keyword>
<keyword id="KW-0812">Transmembrane</keyword>
<keyword id="KW-1133">Transmembrane helix</keyword>
<keyword id="KW-0813">Transport</keyword>
<keyword id="KW-0816">Tricarboxylic acid cycle</keyword>
<sequence length="151" mass="16842">MSLRRTILDLHRQTQRATLSKSLPFSMSHISSASATAAVRNPLGRDLSSIPFAQAQKLKPDSTNLVTDRSISSSIGQSELNKAAKFSRQSSSRGYTNGSFLRKIPVVFHIHEGMEEILADYVHQEMTRNLIVMSLGLFQIIVLKDIILFLL</sequence>
<proteinExistence type="evidence at protein level"/>
<comment type="function">
    <text evidence="2">Membrane-anchoring subunit of succinate dehydrogenase (SDH).</text>
</comment>
<comment type="cofactor">
    <cofactor evidence="2">
        <name>heme</name>
        <dbReference type="ChEBI" id="CHEBI:30413"/>
    </cofactor>
</comment>
<comment type="pathway">
    <text evidence="6">Carbohydrate metabolism; tricarboxylic acid cycle.</text>
</comment>
<comment type="subunit">
    <text evidence="5">Component of complex II composed of eight subunits in plants: four classical SDH subunits SDH1, SDH2, SDH3 and SDH4 (a flavoprotein (FP), an iron-sulfur protein (IP), and a cytochrome b composed of a large and a small subunit.), as well as four subunits unknown in mitochondria from bacteria and heterotrophic eukaryotes.</text>
</comment>
<comment type="subcellular location">
    <subcellularLocation>
        <location evidence="6">Mitochondrion inner membrane</location>
        <topology evidence="3">Single-pass membrane protein</topology>
    </subcellularLocation>
</comment>
<comment type="tissue specificity">
    <text evidence="4">Expressed in flowers, inflorescences and stems.</text>
</comment>
<gene>
    <name evidence="6" type="primary">SDH4</name>
    <name evidence="7" type="ordered locus">At2g46505</name>
</gene>
<name>SDH4_ARATH</name>
<evidence type="ECO:0000250" key="1">
    <source>
        <dbReference type="UniProtKB" id="P0AC44"/>
    </source>
</evidence>
<evidence type="ECO:0000250" key="2">
    <source>
        <dbReference type="UniProtKB" id="P69054"/>
    </source>
</evidence>
<evidence type="ECO:0000255" key="3"/>
<evidence type="ECO:0000269" key="4">
    <source>
    </source>
</evidence>
<evidence type="ECO:0000269" key="5">
    <source>
    </source>
</evidence>
<evidence type="ECO:0000305" key="6"/>
<evidence type="ECO:0000312" key="7">
    <source>
        <dbReference type="Araport" id="AT2G46505"/>
    </source>
</evidence>
<reference key="1">
    <citation type="journal article" date="2001" name="Genetics">
        <title>Multiple losses and transfers to the nucleus of two mitochondrial succinate dehydrogenase genes during angiosperm evolution.</title>
        <authorList>
            <person name="Adams K.L."/>
            <person name="Rosenblueth M."/>
            <person name="Qiu Y.L."/>
            <person name="Palmer J.D."/>
        </authorList>
    </citation>
    <scope>NUCLEOTIDE SEQUENCE [GENOMIC DNA]</scope>
</reference>
<reference key="2">
    <citation type="journal article" date="1999" name="Nature">
        <title>Sequence and analysis of chromosome 2 of the plant Arabidopsis thaliana.</title>
        <authorList>
            <person name="Lin X."/>
            <person name="Kaul S."/>
            <person name="Rounsley S.D."/>
            <person name="Shea T.P."/>
            <person name="Benito M.-I."/>
            <person name="Town C.D."/>
            <person name="Fujii C.Y."/>
            <person name="Mason T.M."/>
            <person name="Bowman C.L."/>
            <person name="Barnstead M.E."/>
            <person name="Feldblyum T.V."/>
            <person name="Buell C.R."/>
            <person name="Ketchum K.A."/>
            <person name="Lee J.J."/>
            <person name="Ronning C.M."/>
            <person name="Koo H.L."/>
            <person name="Moffat K.S."/>
            <person name="Cronin L.A."/>
            <person name="Shen M."/>
            <person name="Pai G."/>
            <person name="Van Aken S."/>
            <person name="Umayam L."/>
            <person name="Tallon L.J."/>
            <person name="Gill J.E."/>
            <person name="Adams M.D."/>
            <person name="Carrera A.J."/>
            <person name="Creasy T.H."/>
            <person name="Goodman H.M."/>
            <person name="Somerville C.R."/>
            <person name="Copenhaver G.P."/>
            <person name="Preuss D."/>
            <person name="Nierman W.C."/>
            <person name="White O."/>
            <person name="Eisen J.A."/>
            <person name="Salzberg S.L."/>
            <person name="Fraser C.M."/>
            <person name="Venter J.C."/>
        </authorList>
    </citation>
    <scope>NUCLEOTIDE SEQUENCE [LARGE SCALE GENOMIC DNA]</scope>
    <source>
        <strain>cv. Columbia</strain>
    </source>
</reference>
<reference key="3">
    <citation type="journal article" date="2017" name="Plant J.">
        <title>Araport11: a complete reannotation of the Arabidopsis thaliana reference genome.</title>
        <authorList>
            <person name="Cheng C.Y."/>
            <person name="Krishnakumar V."/>
            <person name="Chan A.P."/>
            <person name="Thibaud-Nissen F."/>
            <person name="Schobel S."/>
            <person name="Town C.D."/>
        </authorList>
    </citation>
    <scope>GENOME REANNOTATION</scope>
    <source>
        <strain>cv. Columbia</strain>
    </source>
</reference>
<reference key="4">
    <citation type="journal article" date="2003" name="Science">
        <title>Empirical analysis of transcriptional activity in the Arabidopsis genome.</title>
        <authorList>
            <person name="Yamada K."/>
            <person name="Lim J."/>
            <person name="Dale J.M."/>
            <person name="Chen H."/>
            <person name="Shinn P."/>
            <person name="Palm C.J."/>
            <person name="Southwick A.M."/>
            <person name="Wu H.C."/>
            <person name="Kim C.J."/>
            <person name="Nguyen M."/>
            <person name="Pham P.K."/>
            <person name="Cheuk R.F."/>
            <person name="Karlin-Newmann G."/>
            <person name="Liu S.X."/>
            <person name="Lam B."/>
            <person name="Sakano H."/>
            <person name="Wu T."/>
            <person name="Yu G."/>
            <person name="Miranda M."/>
            <person name="Quach H.L."/>
            <person name="Tripp M."/>
            <person name="Chang C.H."/>
            <person name="Lee J.M."/>
            <person name="Toriumi M.J."/>
            <person name="Chan M.M."/>
            <person name="Tang C.C."/>
            <person name="Onodera C.S."/>
            <person name="Deng J.M."/>
            <person name="Akiyama K."/>
            <person name="Ansari Y."/>
            <person name="Arakawa T."/>
            <person name="Banh J."/>
            <person name="Banno F."/>
            <person name="Bowser L."/>
            <person name="Brooks S.Y."/>
            <person name="Carninci P."/>
            <person name="Chao Q."/>
            <person name="Choy N."/>
            <person name="Enju A."/>
            <person name="Goldsmith A.D."/>
            <person name="Gurjal M."/>
            <person name="Hansen N.F."/>
            <person name="Hayashizaki Y."/>
            <person name="Johnson-Hopson C."/>
            <person name="Hsuan V.W."/>
            <person name="Iida K."/>
            <person name="Karnes M."/>
            <person name="Khan S."/>
            <person name="Koesema E."/>
            <person name="Ishida J."/>
            <person name="Jiang P.X."/>
            <person name="Jones T."/>
            <person name="Kawai J."/>
            <person name="Kamiya A."/>
            <person name="Meyers C."/>
            <person name="Nakajima M."/>
            <person name="Narusaka M."/>
            <person name="Seki M."/>
            <person name="Sakurai T."/>
            <person name="Satou M."/>
            <person name="Tamse R."/>
            <person name="Vaysberg M."/>
            <person name="Wallender E.K."/>
            <person name="Wong C."/>
            <person name="Yamamura Y."/>
            <person name="Yuan S."/>
            <person name="Shinozaki K."/>
            <person name="Davis R.W."/>
            <person name="Theologis A."/>
            <person name="Ecker J.R."/>
        </authorList>
    </citation>
    <scope>NUCLEOTIDE SEQUENCE [LARGE SCALE MRNA]</scope>
    <source>
        <strain>cv. Columbia</strain>
    </source>
</reference>
<reference key="5">
    <citation type="submission" date="2002-03" db="EMBL/GenBank/DDBJ databases">
        <title>Full-length cDNA from Arabidopsis thaliana.</title>
        <authorList>
            <person name="Brover V.V."/>
            <person name="Troukhan M.E."/>
            <person name="Alexandrov N.A."/>
            <person name="Lu Y.-P."/>
            <person name="Flavell R.B."/>
            <person name="Feldmann K.A."/>
        </authorList>
    </citation>
    <scope>NUCLEOTIDE SEQUENCE [LARGE SCALE MRNA]</scope>
</reference>
<reference key="6">
    <citation type="journal article" date="2002" name="Plant Mol. Biol.">
        <title>The four subunits of mitochondrial respiratory complex II are encoded by multiple nuclear genes and targeted to mitochondria in Arabidopsis thaliana.</title>
        <authorList>
            <person name="Figueroa P."/>
            <person name="Leon G."/>
            <person name="Elorza A."/>
            <person name="Holuigue L."/>
            <person name="Araya A."/>
            <person name="Jordana X."/>
        </authorList>
    </citation>
    <scope>TISSUE SPECIFICITY</scope>
</reference>
<reference key="7">
    <citation type="journal article" date="2004" name="Plant Mol. Biol.">
        <title>Mitochondrial cytochrome c oxidase and succinate dehydrogenase complexes contain plant specific subunits.</title>
        <authorList>
            <person name="Millar A.H."/>
            <person name="Eubel H."/>
            <person name="Jansch L."/>
            <person name="Kruft V."/>
            <person name="Heazlewood J.L."/>
            <person name="Braun H.P."/>
        </authorList>
    </citation>
    <scope>IDENTIFICATION BY MASS SPECTROMETRY</scope>
    <scope>SUBUNIT</scope>
</reference>
<accession>Q941A0</accession>
<feature type="transit peptide" description="Mitochondrion" evidence="3">
    <location>
        <begin position="1"/>
        <end position="78"/>
    </location>
</feature>
<feature type="chain" id="PRO_0000431749" description="Succinate dehydrogenase subunit 4, mitochondrial" evidence="3">
    <location>
        <begin position="79"/>
        <end position="151"/>
    </location>
</feature>
<feature type="transmembrane region" description="Helical" evidence="3">
    <location>
        <begin position="130"/>
        <end position="150"/>
    </location>
</feature>
<feature type="binding site" description="axial binding residue" evidence="1">
    <location>
        <position position="109"/>
    </location>
    <ligand>
        <name>heme</name>
        <dbReference type="ChEBI" id="CHEBI:30413"/>
        <note>ligand shared with second transmembrane subunit</note>
    </ligand>
    <ligandPart>
        <name>Fe</name>
        <dbReference type="ChEBI" id="CHEBI:18248"/>
    </ligandPart>
</feature>
<feature type="binding site" evidence="1">
    <location>
        <position position="121"/>
    </location>
    <ligand>
        <name>a ubiquinone</name>
        <dbReference type="ChEBI" id="CHEBI:16389"/>
    </ligand>
</feature>
<protein>
    <recommendedName>
        <fullName evidence="6">Succinate dehydrogenase subunit 4, mitochondrial</fullName>
    </recommendedName>
</protein>
<dbReference type="EMBL" id="BK000036">
    <property type="protein sequence ID" value="DAA00016.1"/>
    <property type="molecule type" value="Genomic_DNA"/>
</dbReference>
<dbReference type="EMBL" id="AC006418">
    <property type="protein sequence ID" value="AAM15243.1"/>
    <property type="molecule type" value="Genomic_DNA"/>
</dbReference>
<dbReference type="EMBL" id="AC006526">
    <property type="protein sequence ID" value="AAM15261.1"/>
    <property type="molecule type" value="Genomic_DNA"/>
</dbReference>
<dbReference type="EMBL" id="CP002685">
    <property type="protein sequence ID" value="AEC10711.1"/>
    <property type="molecule type" value="Genomic_DNA"/>
</dbReference>
<dbReference type="EMBL" id="AY052323">
    <property type="protein sequence ID" value="AAK96516.1"/>
    <property type="molecule type" value="mRNA"/>
</dbReference>
<dbReference type="EMBL" id="AY061903">
    <property type="protein sequence ID" value="AAL31230.1"/>
    <property type="molecule type" value="mRNA"/>
</dbReference>
<dbReference type="EMBL" id="AY084510">
    <property type="protein sequence ID" value="AAM61078.1"/>
    <property type="molecule type" value="mRNA"/>
</dbReference>
<dbReference type="RefSeq" id="NP_566077.1">
    <property type="nucleotide sequence ID" value="NM_130215.3"/>
</dbReference>
<dbReference type="FunCoup" id="Q941A0">
    <property type="interactions" value="329"/>
</dbReference>
<dbReference type="STRING" id="3702.Q941A0"/>
<dbReference type="PaxDb" id="3702-AT2G46505.1"/>
<dbReference type="ProteomicsDB" id="234495"/>
<dbReference type="EnsemblPlants" id="AT2G46505.1">
    <property type="protein sequence ID" value="AT2G46505.1"/>
    <property type="gene ID" value="AT2G46505"/>
</dbReference>
<dbReference type="GeneID" id="819261"/>
<dbReference type="Gramene" id="AT2G46505.1">
    <property type="protein sequence ID" value="AT2G46505.1"/>
    <property type="gene ID" value="AT2G46505"/>
</dbReference>
<dbReference type="KEGG" id="ath:AT2G46505"/>
<dbReference type="Araport" id="AT2G46505"/>
<dbReference type="TAIR" id="AT2G46505">
    <property type="gene designation" value="SDH4"/>
</dbReference>
<dbReference type="eggNOG" id="ENOG502SAZF">
    <property type="taxonomic scope" value="Eukaryota"/>
</dbReference>
<dbReference type="HOGENOM" id="CLU_1847890_0_0_1"/>
<dbReference type="InParanoid" id="Q941A0"/>
<dbReference type="OMA" id="HIHEGME"/>
<dbReference type="OrthoDB" id="822750at2759"/>
<dbReference type="BioCyc" id="MetaCyc:AT2G46505-MONOMER"/>
<dbReference type="UniPathway" id="UPA00223"/>
<dbReference type="PRO" id="PR:Q941A0"/>
<dbReference type="Proteomes" id="UP000006548">
    <property type="component" value="Chromosome 2"/>
</dbReference>
<dbReference type="ExpressionAtlas" id="Q941A0">
    <property type="expression patterns" value="baseline and differential"/>
</dbReference>
<dbReference type="GO" id="GO:0005743">
    <property type="term" value="C:mitochondrial inner membrane"/>
    <property type="evidence" value="ECO:0007669"/>
    <property type="project" value="UniProtKB-SubCell"/>
</dbReference>
<dbReference type="GO" id="GO:0005739">
    <property type="term" value="C:mitochondrion"/>
    <property type="evidence" value="ECO:0000314"/>
    <property type="project" value="TAIR"/>
</dbReference>
<dbReference type="GO" id="GO:0045273">
    <property type="term" value="C:respiratory chain complex II (succinate dehydrogenase)"/>
    <property type="evidence" value="ECO:0000314"/>
    <property type="project" value="UniProtKB"/>
</dbReference>
<dbReference type="GO" id="GO:0046872">
    <property type="term" value="F:metal ion binding"/>
    <property type="evidence" value="ECO:0007669"/>
    <property type="project" value="UniProtKB-KW"/>
</dbReference>
<dbReference type="GO" id="GO:0008177">
    <property type="term" value="F:succinate dehydrogenase (quinone) activity"/>
    <property type="evidence" value="ECO:0000250"/>
    <property type="project" value="TAIR"/>
</dbReference>
<dbReference type="GO" id="GO:0006121">
    <property type="term" value="P:mitochondrial electron transport, succinate to ubiquinone"/>
    <property type="evidence" value="ECO:0007669"/>
    <property type="project" value="InterPro"/>
</dbReference>
<dbReference type="GO" id="GO:0006099">
    <property type="term" value="P:tricarboxylic acid cycle"/>
    <property type="evidence" value="ECO:0000304"/>
    <property type="project" value="TAIR"/>
</dbReference>
<dbReference type="InterPro" id="IPR044963">
    <property type="entry name" value="SDH4"/>
</dbReference>
<dbReference type="InterPro" id="IPR034804">
    <property type="entry name" value="SQR/QFR_C/D"/>
</dbReference>
<dbReference type="PANTHER" id="PTHR36358">
    <property type="entry name" value="SUCCINATE DEHYDROGENASE SUBUNIT 4, MITOCHONDRIAL"/>
    <property type="match status" value="1"/>
</dbReference>
<dbReference type="PANTHER" id="PTHR36358:SF1">
    <property type="entry name" value="SUCCINATE DEHYDROGENASE SUBUNIT 4, MITOCHONDRIAL"/>
    <property type="match status" value="1"/>
</dbReference>
<dbReference type="SUPFAM" id="SSF81343">
    <property type="entry name" value="Fumarate reductase respiratory complex transmembrane subunits"/>
    <property type="match status" value="1"/>
</dbReference>
<organism>
    <name type="scientific">Arabidopsis thaliana</name>
    <name type="common">Mouse-ear cress</name>
    <dbReference type="NCBI Taxonomy" id="3702"/>
    <lineage>
        <taxon>Eukaryota</taxon>
        <taxon>Viridiplantae</taxon>
        <taxon>Streptophyta</taxon>
        <taxon>Embryophyta</taxon>
        <taxon>Tracheophyta</taxon>
        <taxon>Spermatophyta</taxon>
        <taxon>Magnoliopsida</taxon>
        <taxon>eudicotyledons</taxon>
        <taxon>Gunneridae</taxon>
        <taxon>Pentapetalae</taxon>
        <taxon>rosids</taxon>
        <taxon>malvids</taxon>
        <taxon>Brassicales</taxon>
        <taxon>Brassicaceae</taxon>
        <taxon>Camelineae</taxon>
        <taxon>Arabidopsis</taxon>
    </lineage>
</organism>